<geneLocation type="chloroplast"/>
<comment type="function">
    <text evidence="1">Usually encoded in the trnK tRNA gene intron. Probably assists in splicing its own and other chloroplast group II introns.</text>
</comment>
<comment type="subcellular location">
    <subcellularLocation>
        <location>Plastid</location>
        <location>Chloroplast</location>
    </subcellularLocation>
</comment>
<comment type="similarity">
    <text evidence="1">Belongs to the intron maturase 2 family. MatK subfamily.</text>
</comment>
<name>MATK_QUELY</name>
<feature type="chain" id="PRO_0000143663" description="Maturase K">
    <location>
        <begin position="1"/>
        <end position="504"/>
    </location>
</feature>
<sequence length="504" mass="59335">MEEFQGYLELDIFRQHDFLYPLIFREYSYALAHGHGLNRYMLLENIGYDNKSSLLIVKRLITTMYQQNYLIISANDSKQNPFFGYNKNLHSKILSEGFAIIVEIPFYLRLISSLEGAEIVRFYNLRSIHSIFPFLEEKFPHLNYSADILIPYPAHLEILVQTLRYRVKDASYLHLLRFFLHEYSNCNSLIITNKSISIFSKSNPRFFLFLYNSYICEYESIFLFLRNQSSHLRLTSSGVLFERLCLYRKIEHFAEVFANDFPVIPCFLKDPFMHYVRYQGKSILASKDTPLLMNKWKSYLVNLWQCHFDVWSHAASIRINQLSKHSLDFLSYFSSVRRNPAVVRNQMLENSFLLNNAPNKLDTIVPIIPLIGSLAKAKFCNAVGHPISKLTRADLSDFEIINRFLHICRNLSHYYSGSSKKKNMYRIKYILRLSCVKTLARKHKSTARAFLKRVDSEFFQEFFTEEGGFISLIFPRASFALRRLYSGRVWYLDIIFINGLSNHE</sequence>
<proteinExistence type="inferred from homology"/>
<accession>Q75VB1</accession>
<keyword id="KW-0150">Chloroplast</keyword>
<keyword id="KW-0507">mRNA processing</keyword>
<keyword id="KW-0934">Plastid</keyword>
<keyword id="KW-0694">RNA-binding</keyword>
<keyword id="KW-0819">tRNA processing</keyword>
<dbReference type="EMBL" id="AB125038">
    <property type="protein sequence ID" value="BAD14101.1"/>
    <property type="molecule type" value="Genomic_DNA"/>
</dbReference>
<dbReference type="GO" id="GO:0009507">
    <property type="term" value="C:chloroplast"/>
    <property type="evidence" value="ECO:0007669"/>
    <property type="project" value="UniProtKB-SubCell"/>
</dbReference>
<dbReference type="GO" id="GO:0003723">
    <property type="term" value="F:RNA binding"/>
    <property type="evidence" value="ECO:0007669"/>
    <property type="project" value="UniProtKB-KW"/>
</dbReference>
<dbReference type="GO" id="GO:0006397">
    <property type="term" value="P:mRNA processing"/>
    <property type="evidence" value="ECO:0007669"/>
    <property type="project" value="UniProtKB-KW"/>
</dbReference>
<dbReference type="GO" id="GO:0008380">
    <property type="term" value="P:RNA splicing"/>
    <property type="evidence" value="ECO:0007669"/>
    <property type="project" value="UniProtKB-UniRule"/>
</dbReference>
<dbReference type="GO" id="GO:0008033">
    <property type="term" value="P:tRNA processing"/>
    <property type="evidence" value="ECO:0007669"/>
    <property type="project" value="UniProtKB-KW"/>
</dbReference>
<dbReference type="HAMAP" id="MF_01390">
    <property type="entry name" value="MatK"/>
    <property type="match status" value="1"/>
</dbReference>
<dbReference type="InterPro" id="IPR024937">
    <property type="entry name" value="Domain_X"/>
</dbReference>
<dbReference type="InterPro" id="IPR002866">
    <property type="entry name" value="Maturase_MatK"/>
</dbReference>
<dbReference type="InterPro" id="IPR024942">
    <property type="entry name" value="Maturase_MatK_N"/>
</dbReference>
<dbReference type="PANTHER" id="PTHR34811">
    <property type="entry name" value="MATURASE K"/>
    <property type="match status" value="1"/>
</dbReference>
<dbReference type="PANTHER" id="PTHR34811:SF1">
    <property type="entry name" value="MATURASE K"/>
    <property type="match status" value="1"/>
</dbReference>
<dbReference type="Pfam" id="PF01348">
    <property type="entry name" value="Intron_maturas2"/>
    <property type="match status" value="1"/>
</dbReference>
<dbReference type="Pfam" id="PF01824">
    <property type="entry name" value="MatK_N"/>
    <property type="match status" value="1"/>
</dbReference>
<protein>
    <recommendedName>
        <fullName evidence="1">Maturase K</fullName>
    </recommendedName>
    <alternativeName>
        <fullName evidence="1">Intron maturase</fullName>
    </alternativeName>
</protein>
<reference key="1">
    <citation type="journal article" date="2003" name="Tropics">
        <title>Phylogeny and genetic variation of Fagaceae in tropical montane forests.</title>
        <authorList>
            <person name="Kamiya K."/>
            <person name="Harada K."/>
            <person name="Ogino K."/>
            <person name="Mahani M.C."/>
            <person name="Latiff A."/>
        </authorList>
    </citation>
    <scope>NUCLEOTIDE SEQUENCE [GENOMIC DNA]</scope>
</reference>
<gene>
    <name evidence="1" type="primary">matK</name>
</gene>
<evidence type="ECO:0000255" key="1">
    <source>
        <dbReference type="HAMAP-Rule" id="MF_01390"/>
    </source>
</evidence>
<organism>
    <name type="scientific">Quercus lyrata</name>
    <name type="common">Overcup oak</name>
    <dbReference type="NCBI Taxonomy" id="252766"/>
    <lineage>
        <taxon>Eukaryota</taxon>
        <taxon>Viridiplantae</taxon>
        <taxon>Streptophyta</taxon>
        <taxon>Embryophyta</taxon>
        <taxon>Tracheophyta</taxon>
        <taxon>Spermatophyta</taxon>
        <taxon>Magnoliopsida</taxon>
        <taxon>eudicotyledons</taxon>
        <taxon>Gunneridae</taxon>
        <taxon>Pentapetalae</taxon>
        <taxon>rosids</taxon>
        <taxon>fabids</taxon>
        <taxon>Fagales</taxon>
        <taxon>Fagaceae</taxon>
        <taxon>Quercus</taxon>
    </lineage>
</organism>